<keyword id="KW-0158">Chromosome</keyword>
<keyword id="KW-0227">DNA damage</keyword>
<keyword id="KW-0234">DNA repair</keyword>
<keyword id="KW-1017">Isopeptide bond</keyword>
<keyword id="KW-0539">Nucleus</keyword>
<keyword id="KW-0597">Phosphoprotein</keyword>
<keyword id="KW-1185">Reference proteome</keyword>
<keyword id="KW-0677">Repeat</keyword>
<keyword id="KW-0832">Ubl conjugation</keyword>
<comment type="function">
    <text evidence="1">Scaffold protein involved in DNA single-strand break repair by mediating the assembly of DNA break repair protein complexes. Negatively regulates ADP-ribosyltransferase activity of PARP1 during base-excision repair in order to prevent excessive PARP1 activity. Recognizes and binds poly-ADP-ribose chains: specifically binds auto-poly-ADP-ribosylated PARP1, limiting its activity.</text>
</comment>
<comment type="subunit">
    <text evidence="1">Homodimer. Interacts with polynucleotide kinase (PNK), DNA polymerase-beta (POLB) and DNA ligase III (LIG3). Interacts with APTX and APLF. Interacts with APEX1; the interaction is induced by SIRT1 and increases with the acetylated form of APEX1. Interacts with (poly-ADP-ribosylated) PARP1.</text>
</comment>
<comment type="subcellular location">
    <subcellularLocation>
        <location evidence="1">Nucleus</location>
    </subcellularLocation>
    <subcellularLocation>
        <location evidence="1">Chromosome</location>
    </subcellularLocation>
    <text evidence="1">Moves from the nucleoli to the global nuclear chromatin upon DNA damage. Recruited to DNA damage sites fowwing interaction with poly-ADP-ribose chains.</text>
</comment>
<comment type="PTM">
    <text evidence="1">Phosphorylation of Ser-371 causes dimer dissociation. Phosphorylation by CK2 promotes interaction with APTX and APLF (By similarity).</text>
</comment>
<comment type="PTM">
    <text evidence="1">Sumoylated.</text>
</comment>
<protein>
    <recommendedName>
        <fullName>DNA repair protein XRCC1</fullName>
    </recommendedName>
    <alternativeName>
        <fullName>X-ray repair cross-complementing protein 1</fullName>
    </alternativeName>
</protein>
<name>XRCC1_RAT</name>
<evidence type="ECO:0000250" key="1">
    <source>
        <dbReference type="UniProtKB" id="P18887"/>
    </source>
</evidence>
<evidence type="ECO:0000255" key="2">
    <source>
        <dbReference type="PROSITE-ProRule" id="PRU00033"/>
    </source>
</evidence>
<evidence type="ECO:0000256" key="3">
    <source>
        <dbReference type="SAM" id="MobiDB-lite"/>
    </source>
</evidence>
<evidence type="ECO:0000305" key="4"/>
<evidence type="ECO:0007744" key="5">
    <source>
    </source>
</evidence>
<accession>Q9ESZ0</accession>
<accession>Q6IRJ9</accession>
<sequence length="631" mass="68836">MPEISLRHVVSCSSQDSTHRAENLLKADTYRKWRSAKAGEKTISVVLQLEKEEQIHSVDIGNDGSAFVEVLVGSSAGGATAGEQDYEVLLVTSSFMSPSESRSGSNPNRVRIFGPDKLVRAAAEKRWDRVKIVCSQPYSKDSPYGLSFVKFHSPPDKDEAEAPSQKVTVTKLGQFRVKEEDDSANSLRPGALFFNRINKAASASASDPAGPSYAAATLQASSAASSASPVPKVGGSSSKLQEPPKGKRKLDLGLEDKKPPSKPSAGPPAPKRPKLPVPSRTPAATPASTPAQKAVPGKPRGEGTEPRGARAGPQELGKILQGVVVVLSGFQNPFRSELRDKALELGAKYRPDWTPDSTHLICAFANTPKYSQVLGLGGRIVRKEWVLDCYRMRRRLPSRRYLMAGLGSSSEDEGDSHSESGEDEAPKLPRKRPQPKAKTQAAGPSSPPRPPTPEETKAPSPGPQDNSDTDGEQSEGRDNGAEDSGDTEDELRRVAKQREQRQPPAPEENGEDPYAGSTDENTDSEAPSEADLPIPELPDFFQGKHFFLYGEFPGDERRKLIRYVTAFNGELEDYMSDRVQFVITAQEWDPNFEEALMENPSLAFVRPRWIYSCNEKQKLLPHQLYGVVPQA</sequence>
<organism>
    <name type="scientific">Rattus norvegicus</name>
    <name type="common">Rat</name>
    <dbReference type="NCBI Taxonomy" id="10116"/>
    <lineage>
        <taxon>Eukaryota</taxon>
        <taxon>Metazoa</taxon>
        <taxon>Chordata</taxon>
        <taxon>Craniata</taxon>
        <taxon>Vertebrata</taxon>
        <taxon>Euteleostomi</taxon>
        <taxon>Mammalia</taxon>
        <taxon>Eutheria</taxon>
        <taxon>Euarchontoglires</taxon>
        <taxon>Glires</taxon>
        <taxon>Rodentia</taxon>
        <taxon>Myomorpha</taxon>
        <taxon>Muroidea</taxon>
        <taxon>Muridae</taxon>
        <taxon>Murinae</taxon>
        <taxon>Rattus</taxon>
    </lineage>
</organism>
<reference key="1">
    <citation type="submission" date="2000-07" db="EMBL/GenBank/DDBJ databases">
        <title>Cloning and characterization of rat Xrcc-1, a DNA repair gene in development and aging of rat.</title>
        <authorList>
            <person name="Chen D."/>
            <person name="Cao G."/>
            <person name="Li M."/>
            <person name="Zhang Y."/>
            <person name="Glenn G."/>
            <person name="Chen J."/>
        </authorList>
    </citation>
    <scope>NUCLEOTIDE SEQUENCE [MRNA]</scope>
    <source>
        <tissue>Brain</tissue>
    </source>
</reference>
<reference key="2">
    <citation type="journal article" date="2004" name="Genome Res.">
        <title>The status, quality, and expansion of the NIH full-length cDNA project: the Mammalian Gene Collection (MGC).</title>
        <authorList>
            <consortium name="The MGC Project Team"/>
        </authorList>
    </citation>
    <scope>NUCLEOTIDE SEQUENCE [LARGE SCALE MRNA]</scope>
    <source>
        <tissue>Lung</tissue>
    </source>
</reference>
<reference key="3">
    <citation type="journal article" date="2012" name="Nat. Commun.">
        <title>Quantitative maps of protein phosphorylation sites across 14 different rat organs and tissues.</title>
        <authorList>
            <person name="Lundby A."/>
            <person name="Secher A."/>
            <person name="Lage K."/>
            <person name="Nordsborg N.B."/>
            <person name="Dmytriyev A."/>
            <person name="Lundby C."/>
            <person name="Olsen J.V."/>
        </authorList>
    </citation>
    <scope>PHOSPHORYLATION [LARGE SCALE ANALYSIS] AT SER-446; THR-452; SER-484 AND THR-487</scope>
    <scope>IDENTIFICATION BY MASS SPECTROMETRY [LARGE SCALE ANALYSIS]</scope>
</reference>
<feature type="chain" id="PRO_0000066046" description="DNA repair protein XRCC1">
    <location>
        <begin position="1"/>
        <end position="631"/>
    </location>
</feature>
<feature type="domain" description="BRCT 1" evidence="2">
    <location>
        <begin position="315"/>
        <end position="403"/>
    </location>
</feature>
<feature type="domain" description="BRCT 2" evidence="2">
    <location>
        <begin position="536"/>
        <end position="627"/>
    </location>
</feature>
<feature type="region of interest" description="Disordered" evidence="3">
    <location>
        <begin position="225"/>
        <end position="314"/>
    </location>
</feature>
<feature type="region of interest" description="Disordered" evidence="3">
    <location>
        <begin position="406"/>
        <end position="537"/>
    </location>
</feature>
<feature type="compositionally biased region" description="Basic and acidic residues" evidence="3">
    <location>
        <begin position="242"/>
        <end position="259"/>
    </location>
</feature>
<feature type="compositionally biased region" description="Pro residues" evidence="3">
    <location>
        <begin position="261"/>
        <end position="270"/>
    </location>
</feature>
<feature type="compositionally biased region" description="Low complexity" evidence="3">
    <location>
        <begin position="277"/>
        <end position="291"/>
    </location>
</feature>
<feature type="compositionally biased region" description="Basic and acidic residues" evidence="3">
    <location>
        <begin position="299"/>
        <end position="308"/>
    </location>
</feature>
<feature type="compositionally biased region" description="Basic and acidic residues" evidence="3">
    <location>
        <begin position="415"/>
        <end position="427"/>
    </location>
</feature>
<feature type="compositionally biased region" description="Basic and acidic residues" evidence="3">
    <location>
        <begin position="490"/>
        <end position="501"/>
    </location>
</feature>
<feature type="modified residue" description="Phosphoserine" evidence="1">
    <location>
        <position position="142"/>
    </location>
</feature>
<feature type="modified residue" description="Phosphoserine" evidence="1">
    <location>
        <position position="206"/>
    </location>
</feature>
<feature type="modified residue" description="Phosphoserine" evidence="1">
    <location>
        <position position="228"/>
    </location>
</feature>
<feature type="modified residue" description="Phosphoserine" evidence="1">
    <location>
        <position position="261"/>
    </location>
</feature>
<feature type="modified residue" description="Phosphothreonine" evidence="1">
    <location>
        <position position="281"/>
    </location>
</feature>
<feature type="modified residue" description="Phosphoserine; by PRKDC" evidence="1">
    <location>
        <position position="371"/>
    </location>
</feature>
<feature type="modified residue" description="Phosphoserine" evidence="1">
    <location>
        <position position="408"/>
    </location>
</feature>
<feature type="modified residue" description="Phosphoserine" evidence="1">
    <location>
        <position position="409"/>
    </location>
</feature>
<feature type="modified residue" description="Phosphoserine" evidence="1">
    <location>
        <position position="410"/>
    </location>
</feature>
<feature type="modified residue" description="Phosphoserine" evidence="1">
    <location>
        <position position="445"/>
    </location>
</feature>
<feature type="modified residue" description="Phosphoserine" evidence="5">
    <location>
        <position position="446"/>
    </location>
</feature>
<feature type="modified residue" description="Phosphothreonine" evidence="5">
    <location>
        <position position="452"/>
    </location>
</feature>
<feature type="modified residue" description="Phosphothreonine" evidence="1">
    <location>
        <position position="456"/>
    </location>
</feature>
<feature type="modified residue" description="Phosphoserine" evidence="1">
    <location>
        <position position="460"/>
    </location>
</feature>
<feature type="modified residue" description="Phosphoserine" evidence="5">
    <location>
        <position position="484"/>
    </location>
</feature>
<feature type="modified residue" description="Phosphothreonine" evidence="5">
    <location>
        <position position="487"/>
    </location>
</feature>
<feature type="modified residue" description="Phosphoserine" evidence="1">
    <location>
        <position position="517"/>
    </location>
</feature>
<feature type="modified residue" description="Phosphothreonine" evidence="1">
    <location>
        <position position="518"/>
    </location>
</feature>
<feature type="modified residue" description="Phosphothreonine" evidence="1">
    <location>
        <position position="522"/>
    </location>
</feature>
<feature type="cross-link" description="Glycyl lysine isopeptide (Lys-Gly) (interchain with G-Cter in SUMO1); alternate" evidence="1">
    <location>
        <position position="178"/>
    </location>
</feature>
<feature type="cross-link" description="Glycyl lysine isopeptide (Lys-Gly) (interchain with G-Cter in SUMO2); alternate" evidence="1">
    <location>
        <position position="178"/>
    </location>
</feature>
<feature type="sequence conflict" description="In Ref. 1; AAG02212." evidence="4" ref="1">
    <original>S</original>
    <variation>L</variation>
    <location>
        <position position="228"/>
    </location>
</feature>
<feature type="sequence conflict" description="In Ref. 1; AAG02212." evidence="4" ref="1">
    <original>K</original>
    <variation>S</variation>
    <location>
        <position position="257"/>
    </location>
</feature>
<feature type="sequence conflict" description="In Ref. 1; AAG02212." evidence="4" ref="1">
    <original>PAP</original>
    <variation>AAL</variation>
    <location>
        <begin position="268"/>
        <end position="270"/>
    </location>
</feature>
<dbReference type="EMBL" id="AF290895">
    <property type="protein sequence ID" value="AAG02212.1"/>
    <property type="molecule type" value="mRNA"/>
</dbReference>
<dbReference type="EMBL" id="BC070894">
    <property type="protein sequence ID" value="AAH70894.1"/>
    <property type="molecule type" value="mRNA"/>
</dbReference>
<dbReference type="RefSeq" id="NP_445887.2">
    <property type="nucleotide sequence ID" value="NM_053435.2"/>
</dbReference>
<dbReference type="SMR" id="Q9ESZ0"/>
<dbReference type="FunCoup" id="Q9ESZ0">
    <property type="interactions" value="3153"/>
</dbReference>
<dbReference type="STRING" id="10116.ENSRNOP00000027057"/>
<dbReference type="GlyGen" id="Q9ESZ0">
    <property type="glycosylation" value="3 sites"/>
</dbReference>
<dbReference type="iPTMnet" id="Q9ESZ0"/>
<dbReference type="PhosphoSitePlus" id="Q9ESZ0"/>
<dbReference type="PaxDb" id="10116-ENSRNOP00000027057"/>
<dbReference type="Ensembl" id="ENSRNOT00000027057.6">
    <property type="protein sequence ID" value="ENSRNOP00000027057.5"/>
    <property type="gene ID" value="ENSRNOG00000019915.6"/>
</dbReference>
<dbReference type="GeneID" id="84495"/>
<dbReference type="KEGG" id="rno:84495"/>
<dbReference type="UCSC" id="RGD:619823">
    <property type="organism name" value="rat"/>
</dbReference>
<dbReference type="AGR" id="RGD:619823"/>
<dbReference type="CTD" id="7515"/>
<dbReference type="RGD" id="619823">
    <property type="gene designation" value="Xrcc1"/>
</dbReference>
<dbReference type="eggNOG" id="KOG3226">
    <property type="taxonomic scope" value="Eukaryota"/>
</dbReference>
<dbReference type="GeneTree" id="ENSGT00390000004140"/>
<dbReference type="HOGENOM" id="CLU_030026_0_0_1"/>
<dbReference type="InParanoid" id="Q9ESZ0"/>
<dbReference type="OMA" id="PEWIYAI"/>
<dbReference type="PhylomeDB" id="Q9ESZ0"/>
<dbReference type="Reactome" id="R-RNO-110381">
    <property type="pathway name" value="Resolution of AP sites via the single-nucleotide replacement pathway"/>
</dbReference>
<dbReference type="Reactome" id="R-RNO-5649702">
    <property type="pathway name" value="APEX1-Independent Resolution of AP Sites via the Single Nucleotide Replacement Pathway"/>
</dbReference>
<dbReference type="Reactome" id="R-RNO-5685939">
    <property type="pathway name" value="HDR through MMEJ (alt-NHEJ)"/>
</dbReference>
<dbReference type="Reactome" id="R-RNO-6782210">
    <property type="pathway name" value="Gap-filling DNA repair synthesis and ligation in TC-NER"/>
</dbReference>
<dbReference type="PRO" id="PR:Q9ESZ0"/>
<dbReference type="Proteomes" id="UP000002494">
    <property type="component" value="Chromosome 1"/>
</dbReference>
<dbReference type="Bgee" id="ENSRNOG00000019915">
    <property type="expression patterns" value="Expressed in esophagus and 20 other cell types or tissues"/>
</dbReference>
<dbReference type="GO" id="GO:0000785">
    <property type="term" value="C:chromatin"/>
    <property type="evidence" value="ECO:0000266"/>
    <property type="project" value="RGD"/>
</dbReference>
<dbReference type="GO" id="GO:0000781">
    <property type="term" value="C:chromosome, telomeric region"/>
    <property type="evidence" value="ECO:0000266"/>
    <property type="project" value="RGD"/>
</dbReference>
<dbReference type="GO" id="GO:0070522">
    <property type="term" value="C:ERCC4-ERCC1 complex"/>
    <property type="evidence" value="ECO:0000266"/>
    <property type="project" value="RGD"/>
</dbReference>
<dbReference type="GO" id="GO:0005730">
    <property type="term" value="C:nucleolus"/>
    <property type="evidence" value="ECO:0000266"/>
    <property type="project" value="RGD"/>
</dbReference>
<dbReference type="GO" id="GO:0005634">
    <property type="term" value="C:nucleus"/>
    <property type="evidence" value="ECO:0000318"/>
    <property type="project" value="GO_Central"/>
</dbReference>
<dbReference type="GO" id="GO:0090734">
    <property type="term" value="C:site of DNA damage"/>
    <property type="evidence" value="ECO:0000266"/>
    <property type="project" value="RGD"/>
</dbReference>
<dbReference type="GO" id="GO:0160002">
    <property type="term" value="F:ADP-D-ribose modification-dependent protein binding"/>
    <property type="evidence" value="ECO:0000266"/>
    <property type="project" value="RGD"/>
</dbReference>
<dbReference type="GO" id="GO:0019899">
    <property type="term" value="F:enzyme binding"/>
    <property type="evidence" value="ECO:0000266"/>
    <property type="project" value="RGD"/>
</dbReference>
<dbReference type="GO" id="GO:0032356">
    <property type="term" value="F:oxidized DNA binding"/>
    <property type="evidence" value="ECO:0000266"/>
    <property type="project" value="RGD"/>
</dbReference>
<dbReference type="GO" id="GO:0072572">
    <property type="term" value="F:poly-ADP-D-ribose binding"/>
    <property type="evidence" value="ECO:0000266"/>
    <property type="project" value="RGD"/>
</dbReference>
<dbReference type="GO" id="GO:0006284">
    <property type="term" value="P:base-excision repair"/>
    <property type="evidence" value="ECO:0000314"/>
    <property type="project" value="RGD"/>
</dbReference>
<dbReference type="GO" id="GO:0021587">
    <property type="term" value="P:cerebellum morphogenesis"/>
    <property type="evidence" value="ECO:0000266"/>
    <property type="project" value="RGD"/>
</dbReference>
<dbReference type="GO" id="GO:0006974">
    <property type="term" value="P:DNA damage response"/>
    <property type="evidence" value="ECO:0000270"/>
    <property type="project" value="RGD"/>
</dbReference>
<dbReference type="GO" id="GO:0006281">
    <property type="term" value="P:DNA repair"/>
    <property type="evidence" value="ECO:0000266"/>
    <property type="project" value="RGD"/>
</dbReference>
<dbReference type="GO" id="GO:0006302">
    <property type="term" value="P:double-strand break repair"/>
    <property type="evidence" value="ECO:0000266"/>
    <property type="project" value="RGD"/>
</dbReference>
<dbReference type="GO" id="GO:0006303">
    <property type="term" value="P:double-strand break repair via nonhomologous end joining"/>
    <property type="evidence" value="ECO:0000266"/>
    <property type="project" value="RGD"/>
</dbReference>
<dbReference type="GO" id="GO:0021766">
    <property type="term" value="P:hippocampus development"/>
    <property type="evidence" value="ECO:0000266"/>
    <property type="project" value="RGD"/>
</dbReference>
<dbReference type="GO" id="GO:1905765">
    <property type="term" value="P:negative regulation of protection from non-homologous end joining at telomere"/>
    <property type="evidence" value="ECO:0000266"/>
    <property type="project" value="RGD"/>
</dbReference>
<dbReference type="GO" id="GO:1903518">
    <property type="term" value="P:positive regulation of single strand break repair"/>
    <property type="evidence" value="ECO:0000266"/>
    <property type="project" value="RGD"/>
</dbReference>
<dbReference type="GO" id="GO:0033194">
    <property type="term" value="P:response to hydroperoxide"/>
    <property type="evidence" value="ECO:0000266"/>
    <property type="project" value="RGD"/>
</dbReference>
<dbReference type="GO" id="GO:0001666">
    <property type="term" value="P:response to hypoxia"/>
    <property type="evidence" value="ECO:0000270"/>
    <property type="project" value="RGD"/>
</dbReference>
<dbReference type="GO" id="GO:0009410">
    <property type="term" value="P:response to xenobiotic stimulus"/>
    <property type="evidence" value="ECO:0000270"/>
    <property type="project" value="RGD"/>
</dbReference>
<dbReference type="GO" id="GO:0000012">
    <property type="term" value="P:single strand break repair"/>
    <property type="evidence" value="ECO:0000266"/>
    <property type="project" value="RGD"/>
</dbReference>
<dbReference type="GO" id="GO:0061819">
    <property type="term" value="P:telomeric DNA-containing double minutes formation"/>
    <property type="evidence" value="ECO:0000266"/>
    <property type="project" value="RGD"/>
</dbReference>
<dbReference type="GO" id="GO:0050882">
    <property type="term" value="P:voluntary musculoskeletal movement"/>
    <property type="evidence" value="ECO:0000266"/>
    <property type="project" value="RGD"/>
</dbReference>
<dbReference type="CDD" id="cd17725">
    <property type="entry name" value="BRCT_XRCC1_rpt1"/>
    <property type="match status" value="1"/>
</dbReference>
<dbReference type="CDD" id="cd17707">
    <property type="entry name" value="BRCT_XRCC1_rpt2"/>
    <property type="match status" value="1"/>
</dbReference>
<dbReference type="FunFam" id="2.60.120.260:FF:000025">
    <property type="entry name" value="DNA repair protein XRCC1 isoform X1"/>
    <property type="match status" value="1"/>
</dbReference>
<dbReference type="FunFam" id="3.40.50.10190:FF:000008">
    <property type="entry name" value="X-ray repair cross complementing 1"/>
    <property type="match status" value="1"/>
</dbReference>
<dbReference type="FunFam" id="3.40.50.10190:FF:000012">
    <property type="entry name" value="X-ray repair cross complementing 1"/>
    <property type="match status" value="1"/>
</dbReference>
<dbReference type="Gene3D" id="3.40.50.10190">
    <property type="entry name" value="BRCT domain"/>
    <property type="match status" value="2"/>
</dbReference>
<dbReference type="Gene3D" id="2.60.120.260">
    <property type="entry name" value="Galactose-binding domain-like"/>
    <property type="match status" value="1"/>
</dbReference>
<dbReference type="InterPro" id="IPR001357">
    <property type="entry name" value="BRCT_dom"/>
</dbReference>
<dbReference type="InterPro" id="IPR036420">
    <property type="entry name" value="BRCT_dom_sf"/>
</dbReference>
<dbReference type="InterPro" id="IPR045080">
    <property type="entry name" value="BRCT_XRCC1_rpt1"/>
</dbReference>
<dbReference type="InterPro" id="IPR008979">
    <property type="entry name" value="Galactose-bd-like_sf"/>
</dbReference>
<dbReference type="InterPro" id="IPR002706">
    <property type="entry name" value="Xrcc1_N"/>
</dbReference>
<dbReference type="PANTHER" id="PTHR11370:SF5">
    <property type="entry name" value="DNA REPAIR PROTEIN XRCC1"/>
    <property type="match status" value="1"/>
</dbReference>
<dbReference type="PANTHER" id="PTHR11370">
    <property type="entry name" value="DNA-REPAIR PROTEIN XRCC1"/>
    <property type="match status" value="1"/>
</dbReference>
<dbReference type="Pfam" id="PF00533">
    <property type="entry name" value="BRCT"/>
    <property type="match status" value="1"/>
</dbReference>
<dbReference type="Pfam" id="PF16589">
    <property type="entry name" value="BRCT_2"/>
    <property type="match status" value="1"/>
</dbReference>
<dbReference type="Pfam" id="PF01834">
    <property type="entry name" value="XRCC1_N"/>
    <property type="match status" value="1"/>
</dbReference>
<dbReference type="SMART" id="SM00292">
    <property type="entry name" value="BRCT"/>
    <property type="match status" value="2"/>
</dbReference>
<dbReference type="SUPFAM" id="SSF52113">
    <property type="entry name" value="BRCT domain"/>
    <property type="match status" value="2"/>
</dbReference>
<dbReference type="SUPFAM" id="SSF49785">
    <property type="entry name" value="Galactose-binding domain-like"/>
    <property type="match status" value="1"/>
</dbReference>
<dbReference type="PROSITE" id="PS50172">
    <property type="entry name" value="BRCT"/>
    <property type="match status" value="2"/>
</dbReference>
<gene>
    <name type="primary">Xrcc1</name>
    <name type="synonym">Xrcc-1</name>
</gene>
<proteinExistence type="evidence at protein level"/>